<comment type="catalytic activity">
    <reaction>
        <text>Cleavage of hydrophobic, N-terminal signal or leader sequences from secreted and periplasmic proteins.</text>
        <dbReference type="EC" id="3.4.21.89"/>
    </reaction>
</comment>
<comment type="subcellular location">
    <subcellularLocation>
        <location evidence="3">Cell membrane</location>
        <topology evidence="3">Single-pass type II membrane protein</topology>
    </subcellularLocation>
</comment>
<comment type="induction">
    <text>Expressed constitutively.</text>
</comment>
<comment type="miscellaneous">
    <text>B.subtilis contains five chromosomal type I signal peptidases: SipS, SipT, SipU, SipV and SipW. They have different, but overlapping, substrate specificities and have different transcription patterns.</text>
</comment>
<comment type="similarity">
    <text evidence="3">Belongs to the peptidase S26 family.</text>
</comment>
<sequence>MKKRFWFLAGVVSVVLAIQVKNAVFIDYKVEGVSMNPTFQEGNELLVNKFSHRFKTIHRFDIVLFKGPDHKVLIKRVIGLPGETIKYKDDQLYVNGKQVAEPFLKHLKSVSAGSHVTGDFSLKDVTGTSKVPKGKYFVVGDNRIYSFDSRHFGPIREKNIVGVISDAE</sequence>
<feature type="chain" id="PRO_0000109502" description="Signal peptidase I V">
    <location>
        <begin position="1"/>
        <end position="168"/>
    </location>
</feature>
<feature type="topological domain" description="Cytoplasmic" evidence="2">
    <location>
        <begin position="1"/>
        <end position="6"/>
    </location>
</feature>
<feature type="transmembrane region" description="Helical" evidence="2">
    <location>
        <begin position="7"/>
        <end position="26"/>
    </location>
</feature>
<feature type="topological domain" description="Extracellular" evidence="2">
    <location>
        <begin position="27"/>
        <end position="168"/>
    </location>
</feature>
<feature type="active site" evidence="1">
    <location>
        <position position="34"/>
    </location>
</feature>
<feature type="active site" evidence="1">
    <location>
        <position position="75"/>
    </location>
</feature>
<evidence type="ECO:0000250" key="1"/>
<evidence type="ECO:0000255" key="2"/>
<evidence type="ECO:0000305" key="3"/>
<organism>
    <name type="scientific">Bacillus subtilis (strain 168)</name>
    <dbReference type="NCBI Taxonomy" id="224308"/>
    <lineage>
        <taxon>Bacteria</taxon>
        <taxon>Bacillati</taxon>
        <taxon>Bacillota</taxon>
        <taxon>Bacilli</taxon>
        <taxon>Bacillales</taxon>
        <taxon>Bacillaceae</taxon>
        <taxon>Bacillus</taxon>
    </lineage>
</organism>
<accession>O07560</accession>
<keyword id="KW-1003">Cell membrane</keyword>
<keyword id="KW-0378">Hydrolase</keyword>
<keyword id="KW-0472">Membrane</keyword>
<keyword id="KW-0645">Protease</keyword>
<keyword id="KW-1185">Reference proteome</keyword>
<keyword id="KW-0812">Transmembrane</keyword>
<keyword id="KW-1133">Transmembrane helix</keyword>
<protein>
    <recommendedName>
        <fullName>Signal peptidase I V</fullName>
        <shortName>SPase I</shortName>
        <ecNumber>3.4.21.89</ecNumber>
    </recommendedName>
    <alternativeName>
        <fullName>Leader peptidase I</fullName>
    </alternativeName>
</protein>
<gene>
    <name type="primary">sipV</name>
    <name type="synonym">yhjF</name>
    <name type="ordered locus">BSU10490</name>
</gene>
<reference key="1">
    <citation type="journal article" date="1998" name="Microbiology">
        <title>The 172 kb prkA-addAB region from 83 degrees to 97 degrees of the Bacillus subtilis chromosome contains several dysfunctional genes, the glyB marker, many genes encoding transporter proteins, and the ubiquitous hit gene.</title>
        <authorList>
            <person name="Noback M.A."/>
            <person name="Holsappel S."/>
            <person name="Kiewiet R."/>
            <person name="Terpstra P."/>
            <person name="Wambutt R."/>
            <person name="Wedler H."/>
            <person name="Venema G."/>
            <person name="Bron S."/>
        </authorList>
    </citation>
    <scope>NUCLEOTIDE SEQUENCE [GENOMIC DNA]</scope>
    <source>
        <strain>168</strain>
    </source>
</reference>
<reference key="2">
    <citation type="journal article" date="1997" name="Nature">
        <title>The complete genome sequence of the Gram-positive bacterium Bacillus subtilis.</title>
        <authorList>
            <person name="Kunst F."/>
            <person name="Ogasawara N."/>
            <person name="Moszer I."/>
            <person name="Albertini A.M."/>
            <person name="Alloni G."/>
            <person name="Azevedo V."/>
            <person name="Bertero M.G."/>
            <person name="Bessieres P."/>
            <person name="Bolotin A."/>
            <person name="Borchert S."/>
            <person name="Borriss R."/>
            <person name="Boursier L."/>
            <person name="Brans A."/>
            <person name="Braun M."/>
            <person name="Brignell S.C."/>
            <person name="Bron S."/>
            <person name="Brouillet S."/>
            <person name="Bruschi C.V."/>
            <person name="Caldwell B."/>
            <person name="Capuano V."/>
            <person name="Carter N.M."/>
            <person name="Choi S.-K."/>
            <person name="Codani J.-J."/>
            <person name="Connerton I.F."/>
            <person name="Cummings N.J."/>
            <person name="Daniel R.A."/>
            <person name="Denizot F."/>
            <person name="Devine K.M."/>
            <person name="Duesterhoeft A."/>
            <person name="Ehrlich S.D."/>
            <person name="Emmerson P.T."/>
            <person name="Entian K.-D."/>
            <person name="Errington J."/>
            <person name="Fabret C."/>
            <person name="Ferrari E."/>
            <person name="Foulger D."/>
            <person name="Fritz C."/>
            <person name="Fujita M."/>
            <person name="Fujita Y."/>
            <person name="Fuma S."/>
            <person name="Galizzi A."/>
            <person name="Galleron N."/>
            <person name="Ghim S.-Y."/>
            <person name="Glaser P."/>
            <person name="Goffeau A."/>
            <person name="Golightly E.J."/>
            <person name="Grandi G."/>
            <person name="Guiseppi G."/>
            <person name="Guy B.J."/>
            <person name="Haga K."/>
            <person name="Haiech J."/>
            <person name="Harwood C.R."/>
            <person name="Henaut A."/>
            <person name="Hilbert H."/>
            <person name="Holsappel S."/>
            <person name="Hosono S."/>
            <person name="Hullo M.-F."/>
            <person name="Itaya M."/>
            <person name="Jones L.-M."/>
            <person name="Joris B."/>
            <person name="Karamata D."/>
            <person name="Kasahara Y."/>
            <person name="Klaerr-Blanchard M."/>
            <person name="Klein C."/>
            <person name="Kobayashi Y."/>
            <person name="Koetter P."/>
            <person name="Koningstein G."/>
            <person name="Krogh S."/>
            <person name="Kumano M."/>
            <person name="Kurita K."/>
            <person name="Lapidus A."/>
            <person name="Lardinois S."/>
            <person name="Lauber J."/>
            <person name="Lazarevic V."/>
            <person name="Lee S.-M."/>
            <person name="Levine A."/>
            <person name="Liu H."/>
            <person name="Masuda S."/>
            <person name="Mauel C."/>
            <person name="Medigue C."/>
            <person name="Medina N."/>
            <person name="Mellado R.P."/>
            <person name="Mizuno M."/>
            <person name="Moestl D."/>
            <person name="Nakai S."/>
            <person name="Noback M."/>
            <person name="Noone D."/>
            <person name="O'Reilly M."/>
            <person name="Ogawa K."/>
            <person name="Ogiwara A."/>
            <person name="Oudega B."/>
            <person name="Park S.-H."/>
            <person name="Parro V."/>
            <person name="Pohl T.M."/>
            <person name="Portetelle D."/>
            <person name="Porwollik S."/>
            <person name="Prescott A.M."/>
            <person name="Presecan E."/>
            <person name="Pujic P."/>
            <person name="Purnelle B."/>
            <person name="Rapoport G."/>
            <person name="Rey M."/>
            <person name="Reynolds S."/>
            <person name="Rieger M."/>
            <person name="Rivolta C."/>
            <person name="Rocha E."/>
            <person name="Roche B."/>
            <person name="Rose M."/>
            <person name="Sadaie Y."/>
            <person name="Sato T."/>
            <person name="Scanlan E."/>
            <person name="Schleich S."/>
            <person name="Schroeter R."/>
            <person name="Scoffone F."/>
            <person name="Sekiguchi J."/>
            <person name="Sekowska A."/>
            <person name="Seror S.J."/>
            <person name="Serror P."/>
            <person name="Shin B.-S."/>
            <person name="Soldo B."/>
            <person name="Sorokin A."/>
            <person name="Tacconi E."/>
            <person name="Takagi T."/>
            <person name="Takahashi H."/>
            <person name="Takemaru K."/>
            <person name="Takeuchi M."/>
            <person name="Tamakoshi A."/>
            <person name="Tanaka T."/>
            <person name="Terpstra P."/>
            <person name="Tognoni A."/>
            <person name="Tosato V."/>
            <person name="Uchiyama S."/>
            <person name="Vandenbol M."/>
            <person name="Vannier F."/>
            <person name="Vassarotti A."/>
            <person name="Viari A."/>
            <person name="Wambutt R."/>
            <person name="Wedler E."/>
            <person name="Wedler H."/>
            <person name="Weitzenegger T."/>
            <person name="Winters P."/>
            <person name="Wipat A."/>
            <person name="Yamamoto H."/>
            <person name="Yamane K."/>
            <person name="Yasumoto K."/>
            <person name="Yata K."/>
            <person name="Yoshida K."/>
            <person name="Yoshikawa H.-F."/>
            <person name="Zumstein E."/>
            <person name="Yoshikawa H."/>
            <person name="Danchin A."/>
        </authorList>
    </citation>
    <scope>NUCLEOTIDE SEQUENCE [LARGE SCALE GENOMIC DNA]</scope>
    <source>
        <strain>168</strain>
    </source>
</reference>
<reference key="3">
    <citation type="journal article" date="1998" name="J. Biotechnol.">
        <title>Protein secretion and possible roles for multiple signal peptidases for precursor processing in bacilli.</title>
        <authorList>
            <person name="Bron S."/>
            <person name="Bolhuis A."/>
            <person name="Tjalsma H."/>
            <person name="Holsappel S."/>
            <person name="Venema G."/>
            <person name="van Dijl J.M."/>
        </authorList>
    </citation>
    <scope>REVIEW</scope>
</reference>
<proteinExistence type="evidence at transcript level"/>
<name>LEPV_BACSU</name>
<dbReference type="EC" id="3.4.21.89"/>
<dbReference type="EMBL" id="Y14081">
    <property type="protein sequence ID" value="CAA74468.1"/>
    <property type="molecule type" value="Genomic_DNA"/>
</dbReference>
<dbReference type="EMBL" id="AL009126">
    <property type="protein sequence ID" value="CAB12889.1"/>
    <property type="molecule type" value="Genomic_DNA"/>
</dbReference>
<dbReference type="PIR" id="A69708">
    <property type="entry name" value="A69708"/>
</dbReference>
<dbReference type="RefSeq" id="NP_388930.1">
    <property type="nucleotide sequence ID" value="NC_000964.3"/>
</dbReference>
<dbReference type="SMR" id="O07560"/>
<dbReference type="FunCoup" id="O07560">
    <property type="interactions" value="474"/>
</dbReference>
<dbReference type="STRING" id="224308.BSU10490"/>
<dbReference type="MEROPS" id="S26.006"/>
<dbReference type="PaxDb" id="224308-BSU10490"/>
<dbReference type="DNASU" id="939318"/>
<dbReference type="EnsemblBacteria" id="CAB12889">
    <property type="protein sequence ID" value="CAB12889"/>
    <property type="gene ID" value="BSU_10490"/>
</dbReference>
<dbReference type="GeneID" id="939318"/>
<dbReference type="KEGG" id="bsu:BSU10490"/>
<dbReference type="PATRIC" id="fig|224308.179.peg.1128"/>
<dbReference type="eggNOG" id="COG0681">
    <property type="taxonomic scope" value="Bacteria"/>
</dbReference>
<dbReference type="InParanoid" id="O07560"/>
<dbReference type="OrthoDB" id="9802919at2"/>
<dbReference type="PhylomeDB" id="O07560"/>
<dbReference type="BioCyc" id="BSUB:BSU10490-MONOMER"/>
<dbReference type="Proteomes" id="UP000001570">
    <property type="component" value="Chromosome"/>
</dbReference>
<dbReference type="GO" id="GO:0005886">
    <property type="term" value="C:plasma membrane"/>
    <property type="evidence" value="ECO:0007669"/>
    <property type="project" value="UniProtKB-SubCell"/>
</dbReference>
<dbReference type="GO" id="GO:0004252">
    <property type="term" value="F:serine-type endopeptidase activity"/>
    <property type="evidence" value="ECO:0000318"/>
    <property type="project" value="GO_Central"/>
</dbReference>
<dbReference type="GO" id="GO:0006465">
    <property type="term" value="P:signal peptide processing"/>
    <property type="evidence" value="ECO:0000318"/>
    <property type="project" value="GO_Central"/>
</dbReference>
<dbReference type="CDD" id="cd06530">
    <property type="entry name" value="S26_SPase_I"/>
    <property type="match status" value="1"/>
</dbReference>
<dbReference type="FunFam" id="2.10.109.10:FF:000008">
    <property type="entry name" value="Signal peptidase I"/>
    <property type="match status" value="1"/>
</dbReference>
<dbReference type="Gene3D" id="2.10.109.10">
    <property type="entry name" value="Umud Fragment, subunit A"/>
    <property type="match status" value="1"/>
</dbReference>
<dbReference type="InterPro" id="IPR036286">
    <property type="entry name" value="LexA/Signal_pep-like_sf"/>
</dbReference>
<dbReference type="InterPro" id="IPR000223">
    <property type="entry name" value="Pept_S26A_signal_pept_1"/>
</dbReference>
<dbReference type="InterPro" id="IPR019758">
    <property type="entry name" value="Pept_S26A_signal_pept_1_CS"/>
</dbReference>
<dbReference type="InterPro" id="IPR019757">
    <property type="entry name" value="Pept_S26A_signal_pept_1_Lys-AS"/>
</dbReference>
<dbReference type="InterPro" id="IPR019756">
    <property type="entry name" value="Pept_S26A_signal_pept_1_Ser-AS"/>
</dbReference>
<dbReference type="InterPro" id="IPR019533">
    <property type="entry name" value="Peptidase_S26"/>
</dbReference>
<dbReference type="NCBIfam" id="TIGR02227">
    <property type="entry name" value="sigpep_I_bact"/>
    <property type="match status" value="1"/>
</dbReference>
<dbReference type="PANTHER" id="PTHR43390:SF1">
    <property type="entry name" value="CHLOROPLAST PROCESSING PEPTIDASE"/>
    <property type="match status" value="1"/>
</dbReference>
<dbReference type="PANTHER" id="PTHR43390">
    <property type="entry name" value="SIGNAL PEPTIDASE I"/>
    <property type="match status" value="1"/>
</dbReference>
<dbReference type="Pfam" id="PF10502">
    <property type="entry name" value="Peptidase_S26"/>
    <property type="match status" value="1"/>
</dbReference>
<dbReference type="PRINTS" id="PR00727">
    <property type="entry name" value="LEADERPTASE"/>
</dbReference>
<dbReference type="SUPFAM" id="SSF51306">
    <property type="entry name" value="LexA/Signal peptidase"/>
    <property type="match status" value="1"/>
</dbReference>
<dbReference type="PROSITE" id="PS00501">
    <property type="entry name" value="SPASE_I_1"/>
    <property type="match status" value="1"/>
</dbReference>
<dbReference type="PROSITE" id="PS00760">
    <property type="entry name" value="SPASE_I_2"/>
    <property type="match status" value="1"/>
</dbReference>
<dbReference type="PROSITE" id="PS00761">
    <property type="entry name" value="SPASE_I_3"/>
    <property type="match status" value="1"/>
</dbReference>